<reference key="1">
    <citation type="journal article" date="2009" name="PLoS Genet.">
        <title>Organised genome dynamics in the Escherichia coli species results in highly diverse adaptive paths.</title>
        <authorList>
            <person name="Touchon M."/>
            <person name="Hoede C."/>
            <person name="Tenaillon O."/>
            <person name="Barbe V."/>
            <person name="Baeriswyl S."/>
            <person name="Bidet P."/>
            <person name="Bingen E."/>
            <person name="Bonacorsi S."/>
            <person name="Bouchier C."/>
            <person name="Bouvet O."/>
            <person name="Calteau A."/>
            <person name="Chiapello H."/>
            <person name="Clermont O."/>
            <person name="Cruveiller S."/>
            <person name="Danchin A."/>
            <person name="Diard M."/>
            <person name="Dossat C."/>
            <person name="Karoui M.E."/>
            <person name="Frapy E."/>
            <person name="Garry L."/>
            <person name="Ghigo J.M."/>
            <person name="Gilles A.M."/>
            <person name="Johnson J."/>
            <person name="Le Bouguenec C."/>
            <person name="Lescat M."/>
            <person name="Mangenot S."/>
            <person name="Martinez-Jehanne V."/>
            <person name="Matic I."/>
            <person name="Nassif X."/>
            <person name="Oztas S."/>
            <person name="Petit M.A."/>
            <person name="Pichon C."/>
            <person name="Rouy Z."/>
            <person name="Ruf C.S."/>
            <person name="Schneider D."/>
            <person name="Tourret J."/>
            <person name="Vacherie B."/>
            <person name="Vallenet D."/>
            <person name="Medigue C."/>
            <person name="Rocha E.P.C."/>
            <person name="Denamur E."/>
        </authorList>
    </citation>
    <scope>NUCLEOTIDE SEQUENCE [LARGE SCALE GENOMIC DNA]</scope>
    <source>
        <strain>55989 / EAEC</strain>
    </source>
</reference>
<evidence type="ECO:0000255" key="1">
    <source>
        <dbReference type="HAMAP-Rule" id="MF_00258"/>
    </source>
</evidence>
<gene>
    <name evidence="1" type="primary">murI</name>
    <name type="ordered locus">EC55989_4452</name>
</gene>
<organism>
    <name type="scientific">Escherichia coli (strain 55989 / EAEC)</name>
    <dbReference type="NCBI Taxonomy" id="585055"/>
    <lineage>
        <taxon>Bacteria</taxon>
        <taxon>Pseudomonadati</taxon>
        <taxon>Pseudomonadota</taxon>
        <taxon>Gammaproteobacteria</taxon>
        <taxon>Enterobacterales</taxon>
        <taxon>Enterobacteriaceae</taxon>
        <taxon>Escherichia</taxon>
    </lineage>
</organism>
<sequence length="285" mass="31132">MATKLQDGNTPCLAATPSEPRPTVLVFDSGVGGLSVYDEIRHLLPDLHYIYAFDNVAFPYGEKSEEFIVERVVAIVTAVQERYPLALAVVACNTASTVSLPALREKFDFPVVGVVPAIKPAARLTANGIVGLLATRGTVKRSYTHELIARFANECQIEMLGSAEMVELAEAKLHGEDVSLDALKRILRPWLRMKEPPDTVVLGCTHFPLLQEELLQVLPEGTRLVDSGAAIARRTAWLLEHEAPDAKSADANIAFCMAMTPEAEQLLPVLQRYGFETLEKLAVLG</sequence>
<comment type="function">
    <text evidence="1">Provides the (R)-glutamate required for cell wall biosynthesis.</text>
</comment>
<comment type="catalytic activity">
    <reaction evidence="1">
        <text>L-glutamate = D-glutamate</text>
        <dbReference type="Rhea" id="RHEA:12813"/>
        <dbReference type="ChEBI" id="CHEBI:29985"/>
        <dbReference type="ChEBI" id="CHEBI:29986"/>
        <dbReference type="EC" id="5.1.1.3"/>
    </reaction>
</comment>
<comment type="pathway">
    <text evidence="1">Cell wall biogenesis; peptidoglycan biosynthesis.</text>
</comment>
<comment type="similarity">
    <text evidence="1">Belongs to the aspartate/glutamate racemases family.</text>
</comment>
<keyword id="KW-0133">Cell shape</keyword>
<keyword id="KW-0961">Cell wall biogenesis/degradation</keyword>
<keyword id="KW-0413">Isomerase</keyword>
<keyword id="KW-0573">Peptidoglycan synthesis</keyword>
<keyword id="KW-1185">Reference proteome</keyword>
<dbReference type="EC" id="5.1.1.3" evidence="1"/>
<dbReference type="EMBL" id="CU928145">
    <property type="protein sequence ID" value="CAV01209.1"/>
    <property type="molecule type" value="Genomic_DNA"/>
</dbReference>
<dbReference type="RefSeq" id="WP_000201827.1">
    <property type="nucleotide sequence ID" value="NC_011748.1"/>
</dbReference>
<dbReference type="SMR" id="B7LA65"/>
<dbReference type="GeneID" id="75203201"/>
<dbReference type="KEGG" id="eck:EC55989_4452"/>
<dbReference type="HOGENOM" id="CLU_052344_2_0_6"/>
<dbReference type="UniPathway" id="UPA00219"/>
<dbReference type="Proteomes" id="UP000000746">
    <property type="component" value="Chromosome"/>
</dbReference>
<dbReference type="GO" id="GO:0008881">
    <property type="term" value="F:glutamate racemase activity"/>
    <property type="evidence" value="ECO:0007669"/>
    <property type="project" value="UniProtKB-UniRule"/>
</dbReference>
<dbReference type="GO" id="GO:0071555">
    <property type="term" value="P:cell wall organization"/>
    <property type="evidence" value="ECO:0007669"/>
    <property type="project" value="UniProtKB-KW"/>
</dbReference>
<dbReference type="GO" id="GO:0009252">
    <property type="term" value="P:peptidoglycan biosynthetic process"/>
    <property type="evidence" value="ECO:0007669"/>
    <property type="project" value="UniProtKB-UniRule"/>
</dbReference>
<dbReference type="GO" id="GO:0008360">
    <property type="term" value="P:regulation of cell shape"/>
    <property type="evidence" value="ECO:0007669"/>
    <property type="project" value="UniProtKB-KW"/>
</dbReference>
<dbReference type="FunFam" id="3.40.50.1860:FF:000002">
    <property type="entry name" value="Glutamate racemase"/>
    <property type="match status" value="1"/>
</dbReference>
<dbReference type="Gene3D" id="3.40.50.1860">
    <property type="match status" value="2"/>
</dbReference>
<dbReference type="HAMAP" id="MF_00258">
    <property type="entry name" value="Glu_racemase"/>
    <property type="match status" value="1"/>
</dbReference>
<dbReference type="InterPro" id="IPR015942">
    <property type="entry name" value="Asp/Glu/hydantoin_racemase"/>
</dbReference>
<dbReference type="InterPro" id="IPR001920">
    <property type="entry name" value="Asp/Glu_race"/>
</dbReference>
<dbReference type="InterPro" id="IPR018187">
    <property type="entry name" value="Asp/Glu_racemase_AS_1"/>
</dbReference>
<dbReference type="InterPro" id="IPR033134">
    <property type="entry name" value="Asp/Glu_racemase_AS_2"/>
</dbReference>
<dbReference type="InterPro" id="IPR004391">
    <property type="entry name" value="Glu_race"/>
</dbReference>
<dbReference type="NCBIfam" id="TIGR00067">
    <property type="entry name" value="glut_race"/>
    <property type="match status" value="1"/>
</dbReference>
<dbReference type="NCBIfam" id="NF002034">
    <property type="entry name" value="PRK00865.1-1"/>
    <property type="match status" value="1"/>
</dbReference>
<dbReference type="PANTHER" id="PTHR21198">
    <property type="entry name" value="GLUTAMATE RACEMASE"/>
    <property type="match status" value="1"/>
</dbReference>
<dbReference type="PANTHER" id="PTHR21198:SF2">
    <property type="entry name" value="GLUTAMATE RACEMASE"/>
    <property type="match status" value="1"/>
</dbReference>
<dbReference type="Pfam" id="PF01177">
    <property type="entry name" value="Asp_Glu_race"/>
    <property type="match status" value="1"/>
</dbReference>
<dbReference type="SUPFAM" id="SSF53681">
    <property type="entry name" value="Aspartate/glutamate racemase"/>
    <property type="match status" value="2"/>
</dbReference>
<dbReference type="PROSITE" id="PS00923">
    <property type="entry name" value="ASP_GLU_RACEMASE_1"/>
    <property type="match status" value="1"/>
</dbReference>
<dbReference type="PROSITE" id="PS00924">
    <property type="entry name" value="ASP_GLU_RACEMASE_2"/>
    <property type="match status" value="1"/>
</dbReference>
<accession>B7LA65</accession>
<feature type="chain" id="PRO_1000125608" description="Glutamate racemase">
    <location>
        <begin position="1"/>
        <end position="285"/>
    </location>
</feature>
<feature type="active site" description="Proton donor/acceptor" evidence="1">
    <location>
        <position position="92"/>
    </location>
</feature>
<feature type="active site" description="Proton donor/acceptor" evidence="1">
    <location>
        <position position="204"/>
    </location>
</feature>
<feature type="binding site" evidence="1">
    <location>
        <begin position="28"/>
        <end position="29"/>
    </location>
    <ligand>
        <name>substrate</name>
    </ligand>
</feature>
<feature type="binding site" evidence="1">
    <location>
        <begin position="60"/>
        <end position="61"/>
    </location>
    <ligand>
        <name>substrate</name>
    </ligand>
</feature>
<feature type="binding site" evidence="1">
    <location>
        <begin position="93"/>
        <end position="94"/>
    </location>
    <ligand>
        <name>substrate</name>
    </ligand>
</feature>
<feature type="binding site" evidence="1">
    <location>
        <begin position="205"/>
        <end position="206"/>
    </location>
    <ligand>
        <name>substrate</name>
    </ligand>
</feature>
<protein>
    <recommendedName>
        <fullName evidence="1">Glutamate racemase</fullName>
        <ecNumber evidence="1">5.1.1.3</ecNumber>
    </recommendedName>
</protein>
<proteinExistence type="inferred from homology"/>
<name>MURI_ECO55</name>